<protein>
    <recommendedName>
        <fullName evidence="4">Stromal processing peptidase, chloroplastic</fullName>
        <ecNumber evidence="1">3.4.24.-</ecNumber>
    </recommendedName>
</protein>
<gene>
    <name evidence="5" type="ORF">OsI_23765</name>
</gene>
<evidence type="ECO:0000250" key="1">
    <source>
        <dbReference type="UniProtKB" id="Q40983"/>
    </source>
</evidence>
<evidence type="ECO:0000269" key="2">
    <source>
    </source>
</evidence>
<evidence type="ECO:0000303" key="3">
    <source ref="2"/>
</evidence>
<evidence type="ECO:0000305" key="4"/>
<evidence type="ECO:0000312" key="5">
    <source>
        <dbReference type="EMBL" id="EEC81006.1"/>
    </source>
</evidence>
<reference key="1">
    <citation type="journal article" date="2005" name="PLoS Biol.">
        <title>The genomes of Oryza sativa: a history of duplications.</title>
        <authorList>
            <person name="Yu J."/>
            <person name="Wang J."/>
            <person name="Lin W."/>
            <person name="Li S."/>
            <person name="Li H."/>
            <person name="Zhou J."/>
            <person name="Ni P."/>
            <person name="Dong W."/>
            <person name="Hu S."/>
            <person name="Zeng C."/>
            <person name="Zhang J."/>
            <person name="Zhang Y."/>
            <person name="Li R."/>
            <person name="Xu Z."/>
            <person name="Li S."/>
            <person name="Li X."/>
            <person name="Zheng H."/>
            <person name="Cong L."/>
            <person name="Lin L."/>
            <person name="Yin J."/>
            <person name="Geng J."/>
            <person name="Li G."/>
            <person name="Shi J."/>
            <person name="Liu J."/>
            <person name="Lv H."/>
            <person name="Li J."/>
            <person name="Wang J."/>
            <person name="Deng Y."/>
            <person name="Ran L."/>
            <person name="Shi X."/>
            <person name="Wang X."/>
            <person name="Wu Q."/>
            <person name="Li C."/>
            <person name="Ren X."/>
            <person name="Wang J."/>
            <person name="Wang X."/>
            <person name="Li D."/>
            <person name="Liu D."/>
            <person name="Zhang X."/>
            <person name="Ji Z."/>
            <person name="Zhao W."/>
            <person name="Sun Y."/>
            <person name="Zhang Z."/>
            <person name="Bao J."/>
            <person name="Han Y."/>
            <person name="Dong L."/>
            <person name="Ji J."/>
            <person name="Chen P."/>
            <person name="Wu S."/>
            <person name="Liu J."/>
            <person name="Xiao Y."/>
            <person name="Bu D."/>
            <person name="Tan J."/>
            <person name="Yang L."/>
            <person name="Ye C."/>
            <person name="Zhang J."/>
            <person name="Xu J."/>
            <person name="Zhou Y."/>
            <person name="Yu Y."/>
            <person name="Zhang B."/>
            <person name="Zhuang S."/>
            <person name="Wei H."/>
            <person name="Liu B."/>
            <person name="Lei M."/>
            <person name="Yu H."/>
            <person name="Li Y."/>
            <person name="Xu H."/>
            <person name="Wei S."/>
            <person name="He X."/>
            <person name="Fang L."/>
            <person name="Zhang Z."/>
            <person name="Zhang Y."/>
            <person name="Huang X."/>
            <person name="Su Z."/>
            <person name="Tong W."/>
            <person name="Li J."/>
            <person name="Tong Z."/>
            <person name="Li S."/>
            <person name="Ye J."/>
            <person name="Wang L."/>
            <person name="Fang L."/>
            <person name="Lei T."/>
            <person name="Chen C.-S."/>
            <person name="Chen H.-C."/>
            <person name="Xu Z."/>
            <person name="Li H."/>
            <person name="Huang H."/>
            <person name="Zhang F."/>
            <person name="Xu H."/>
            <person name="Li N."/>
            <person name="Zhao C."/>
            <person name="Li S."/>
            <person name="Dong L."/>
            <person name="Huang Y."/>
            <person name="Li L."/>
            <person name="Xi Y."/>
            <person name="Qi Q."/>
            <person name="Li W."/>
            <person name="Zhang B."/>
            <person name="Hu W."/>
            <person name="Zhang Y."/>
            <person name="Tian X."/>
            <person name="Jiao Y."/>
            <person name="Liang X."/>
            <person name="Jin J."/>
            <person name="Gao L."/>
            <person name="Zheng W."/>
            <person name="Hao B."/>
            <person name="Liu S.-M."/>
            <person name="Wang W."/>
            <person name="Yuan L."/>
            <person name="Cao M."/>
            <person name="McDermott J."/>
            <person name="Samudrala R."/>
            <person name="Wang J."/>
            <person name="Wong G.K.-S."/>
            <person name="Yang H."/>
        </authorList>
    </citation>
    <scope>NUCLEOTIDE SEQUENCE [LARGE SCALE GENOMIC DNA]</scope>
    <source>
        <strain>cv. 93-11</strain>
    </source>
</reference>
<reference key="2">
    <citation type="journal article" date="2006" name="Physiol. Plantarum">
        <title>Function of the stromal processing peptidase in the chloroplast import pathway.</title>
        <authorList>
            <person name="Richter S."/>
            <person name="Zhong R."/>
            <person name="Lamppa G.K."/>
        </authorList>
    </citation>
    <scope>REVIEW</scope>
</reference>
<reference key="3">
    <citation type="journal article" date="2010" name="Plant Cell Physiol.">
        <title>A rice stromal processing peptidase regulates chloroplast and root development.</title>
        <authorList>
            <person name="Yue R."/>
            <person name="Wang X."/>
            <person name="Chen J."/>
            <person name="Ma X."/>
            <person name="Zhang H."/>
            <person name="Mao C."/>
            <person name="Wu P."/>
        </authorList>
    </citation>
    <scope>MUTAGENESIS OF GLU-945</scope>
    <scope>TISSUE SPECIFICITY</scope>
    <scope>SUBCELLULAR LOCATION</scope>
    <source>
        <strain>cv. Kasalath</strain>
    </source>
</reference>
<reference key="4">
    <citation type="journal article" date="2013" name="Biochim. Biophys. Acta">
        <title>Processing peptidases in mitochondria and chloroplasts.</title>
        <authorList>
            <person name="Teixeira P.F."/>
            <person name="Glaser E."/>
        </authorList>
    </citation>
    <scope>REVIEW</scope>
</reference>
<dbReference type="EC" id="3.4.24.-" evidence="1"/>
<dbReference type="EMBL" id="CM000131">
    <property type="protein sequence ID" value="EEC81006.1"/>
    <property type="status" value="ALT_SEQ"/>
    <property type="molecule type" value="Genomic_DNA"/>
</dbReference>
<dbReference type="SMR" id="B8B0E2"/>
<dbReference type="STRING" id="39946.B8B0E2"/>
<dbReference type="MEROPS" id="M16.004"/>
<dbReference type="HOGENOM" id="CLU_007907_0_0_1"/>
<dbReference type="Proteomes" id="UP000007015">
    <property type="component" value="Chromosome 6"/>
</dbReference>
<dbReference type="GO" id="GO:0009507">
    <property type="term" value="C:chloroplast"/>
    <property type="evidence" value="ECO:0000314"/>
    <property type="project" value="UniProtKB"/>
</dbReference>
<dbReference type="GO" id="GO:0009570">
    <property type="term" value="C:chloroplast stroma"/>
    <property type="evidence" value="ECO:0007669"/>
    <property type="project" value="UniProtKB-SubCell"/>
</dbReference>
<dbReference type="GO" id="GO:0046872">
    <property type="term" value="F:metal ion binding"/>
    <property type="evidence" value="ECO:0007669"/>
    <property type="project" value="UniProtKB-KW"/>
</dbReference>
<dbReference type="GO" id="GO:0004222">
    <property type="term" value="F:metalloendopeptidase activity"/>
    <property type="evidence" value="ECO:0000315"/>
    <property type="project" value="UniProtKB"/>
</dbReference>
<dbReference type="GO" id="GO:0016485">
    <property type="term" value="P:protein processing"/>
    <property type="evidence" value="ECO:0000315"/>
    <property type="project" value="UniProtKB"/>
</dbReference>
<dbReference type="FunFam" id="3.30.830.10:FF:000024">
    <property type="entry name" value="Stromal processing peptidase chloroplastic"/>
    <property type="match status" value="1"/>
</dbReference>
<dbReference type="FunFam" id="3.30.830.10:FF:000025">
    <property type="entry name" value="Stromal processing peptidase chloroplastic"/>
    <property type="match status" value="1"/>
</dbReference>
<dbReference type="FunFam" id="3.30.830.10:FF:000033">
    <property type="entry name" value="Stromal processing peptidase, chloroplastic"/>
    <property type="match status" value="1"/>
</dbReference>
<dbReference type="FunFam" id="3.30.830.10:FF:000040">
    <property type="entry name" value="Stromal processing peptidase, chloroplastic"/>
    <property type="match status" value="1"/>
</dbReference>
<dbReference type="Gene3D" id="3.30.830.10">
    <property type="entry name" value="Metalloenzyme, LuxS/M16 peptidase-like"/>
    <property type="match status" value="4"/>
</dbReference>
<dbReference type="InterPro" id="IPR011249">
    <property type="entry name" value="Metalloenz_LuxS/M16"/>
</dbReference>
<dbReference type="InterPro" id="IPR011765">
    <property type="entry name" value="Pept_M16_N"/>
</dbReference>
<dbReference type="InterPro" id="IPR050626">
    <property type="entry name" value="Peptidase_M16"/>
</dbReference>
<dbReference type="InterPro" id="IPR007863">
    <property type="entry name" value="Peptidase_M16_C"/>
</dbReference>
<dbReference type="PANTHER" id="PTHR43690">
    <property type="entry name" value="NARDILYSIN"/>
    <property type="match status" value="1"/>
</dbReference>
<dbReference type="PANTHER" id="PTHR43690:SF33">
    <property type="entry name" value="STROMAL PROCESSING PEPTIDASE, CHLOROPLASTIC"/>
    <property type="match status" value="1"/>
</dbReference>
<dbReference type="Pfam" id="PF00675">
    <property type="entry name" value="Peptidase_M16"/>
    <property type="match status" value="1"/>
</dbReference>
<dbReference type="Pfam" id="PF05193">
    <property type="entry name" value="Peptidase_M16_C"/>
    <property type="match status" value="1"/>
</dbReference>
<dbReference type="SUPFAM" id="SSF63411">
    <property type="entry name" value="LuxS/MPP-like metallohydrolase"/>
    <property type="match status" value="3"/>
</dbReference>
<proteinExistence type="evidence at protein level"/>
<organism>
    <name type="scientific">Oryza sativa subsp. indica</name>
    <name type="common">Rice</name>
    <dbReference type="NCBI Taxonomy" id="39946"/>
    <lineage>
        <taxon>Eukaryota</taxon>
        <taxon>Viridiplantae</taxon>
        <taxon>Streptophyta</taxon>
        <taxon>Embryophyta</taxon>
        <taxon>Tracheophyta</taxon>
        <taxon>Spermatophyta</taxon>
        <taxon>Magnoliopsida</taxon>
        <taxon>Liliopsida</taxon>
        <taxon>Poales</taxon>
        <taxon>Poaceae</taxon>
        <taxon>BOP clade</taxon>
        <taxon>Oryzoideae</taxon>
        <taxon>Oryzeae</taxon>
        <taxon>Oryzinae</taxon>
        <taxon>Oryza</taxon>
        <taxon>Oryza sativa</taxon>
    </lineage>
</organism>
<comment type="function">
    <text evidence="1">Cleaves presequences (transit peptides) from chloroplastic protein precursors. Initially recognizes a precursor by binding to the C-terminus of its transit peptide and then removes the transit peptide in a single endoproteolytic step. In a next step, pursues the cleavage of transit peptide to a subfragment form.</text>
</comment>
<comment type="cofactor">
    <cofactor evidence="1">
        <name>Zn(2+)</name>
        <dbReference type="ChEBI" id="CHEBI:29105"/>
    </cofactor>
    <text evidence="1">Binds 1 zinc ion per subunit.</text>
</comment>
<comment type="subcellular location">
    <subcellularLocation>
        <location evidence="1 2">Plastid</location>
        <location evidence="1 2">Chloroplast stroma</location>
    </subcellularLocation>
</comment>
<comment type="tissue specificity">
    <text evidence="2">Widely expressed.</text>
</comment>
<comment type="similarity">
    <text evidence="4">Belongs to the peptidase M16 family.</text>
</comment>
<comment type="sequence caution" evidence="4">
    <conflict type="erroneous gene model prediction">
        <sequence resource="EMBL-CDS" id="EEC81006"/>
    </conflict>
</comment>
<name>SPP_ORYSI</name>
<keyword id="KW-0150">Chloroplast</keyword>
<keyword id="KW-0378">Hydrolase</keyword>
<keyword id="KW-0479">Metal-binding</keyword>
<keyword id="KW-0482">Metalloprotease</keyword>
<keyword id="KW-0934">Plastid</keyword>
<keyword id="KW-0645">Protease</keyword>
<keyword id="KW-1185">Reference proteome</keyword>
<keyword id="KW-0809">Transit peptide</keyword>
<keyword id="KW-0862">Zinc</keyword>
<accession>B8B0E2</accession>
<sequence length="1246" mass="138656">MASFPSPPLAAAAAAAPPRLAPGLPLAAAAVRRPSSLARRSSIALAAPANPLRCIHRRAVSPRLRRRTEAVGAASAAIGSLGEEREGCLSCFPRGRRRGRPGLARFAPCALPHTYGLSSLHSGLTGAKIRRRHVLHAAGPDEPHVASPTWSETALDKHYVDQPIGKEELEGFLNTPLPSHPKLVRGQLKNGLRYLILPNKVPANRFEAHMEVHVGSIDEEEDEQGIAHMIEHVAFLGSKKREKLLGTGARSNAYTDFHHTVFHIHSPTKTKEYGEDLLPSVLDALNEIAFHPKFSSSRVEKERRAILSELQMMNTIEYRVDCQLLQHLHSENKLSERFPIGLEEQIHKWDPDKIRRFHERWYYPANATLYLVGEINDIPRAIREIEAVFEHTLPEGEAAPMSTASPFGAMASLFAPKLPGGLAASLTGERSPAADKIKPVKRERQAIRPPVEHKWSLPGVAQDAKPPAIFQHELIQSFSINMFCKIPVNQVQTYKDLRSVLMKRIFLSALHFRINTRYKSSNPPFTSVELDHSDSGREGCTVTTLTVTAEPQNWRSAIKVAVHEVRRLKEFGVTMGEMTRYMDALIKDSEQLAMMIDSVPSVDNLDFIMESDALRHTVMDQLQGHESLLAVAETVTLEEVNTVGAEVLEFISDYGKPDAPLPAAIVACVPKKVHMDGVGETDFEIHPEEITDSIKAGLEEPIYPEPELEVPKELITQSELEDLKLQRKPSFASLSKEENVVKIFDDETGIAQRRLSNGISINYKITQNEARVGVMRLIVGGGRATEDSESKGSVIVGVRTLSEGGCVGNFSREQVELFCVNNLINCSLESNEEFIFMEFRFALRDNGMRAAFQLLHMVLEHNVWLEDAFDRATQLYLSYYRSIPKSLERSTAHKLMLAMLNHDERFVEPSPHSLQKLTLQSVKDAVMNQFVGDNMEVSIVGDFTEEEVESCVLDYLGTVSAPKSSKTQEHIEKISFLPFPSDLHFQQVYIKDTDERACAYIAGPAPNRWGFATEGNDLFNVIRSSSGDAQVSESANTDLTERKHNDVRSHSLFFGITLSLLAEIINSRLFTTVRDSMGLTYDVSFELNLFDKLDLGWYVIAVTSTPSKVHKAVDACKGVLRGLHSNKIVERELDRAKRTLLMKHEAETKTNAYWLGLLAHLQSSSVPRKEISCIKELTMLYESATIEDLYLAYEHLKVDESSLFACIGIAGAESGEETTDDELDMGLHGMGPIGGRGLSTMTRPTT</sequence>
<feature type="transit peptide" description="Chloroplast" evidence="3">
    <location>
        <begin position="1"/>
        <end position="136"/>
    </location>
</feature>
<feature type="chain" id="PRO_0000435734" description="Stromal processing peptidase, chloroplastic">
    <location>
        <begin position="137"/>
        <end position="1246"/>
    </location>
</feature>
<feature type="active site" description="Proton acceptor" evidence="1">
    <location>
        <position position="231"/>
    </location>
</feature>
<feature type="active site" evidence="4">
    <location>
        <position position="302"/>
    </location>
</feature>
<feature type="binding site" evidence="1">
    <location>
        <position position="228"/>
    </location>
    <ligand>
        <name>Zn(2+)</name>
        <dbReference type="ChEBI" id="CHEBI:29105"/>
    </ligand>
</feature>
<feature type="binding site" evidence="1">
    <location>
        <position position="232"/>
    </location>
    <ligand>
        <name>Zn(2+)</name>
        <dbReference type="ChEBI" id="CHEBI:29105"/>
    </ligand>
</feature>
<feature type="binding site" evidence="4">
    <location>
        <position position="309"/>
    </location>
    <ligand>
        <name>Zn(2+)</name>
        <dbReference type="ChEBI" id="CHEBI:29105"/>
    </ligand>
</feature>
<feature type="mutagenesis site" description="Displays leaf chlorosis at the early seedling stage and retarted root growth." evidence="2">
    <location>
        <position position="945"/>
    </location>
</feature>